<name>VEGFA_MOUSE</name>
<dbReference type="EMBL" id="S37052">
    <property type="protein sequence ID" value="AAB22252.1"/>
    <property type="molecule type" value="mRNA"/>
</dbReference>
<dbReference type="EMBL" id="S38083">
    <property type="protein sequence ID" value="AAB22253.1"/>
    <property type="molecule type" value="mRNA"/>
</dbReference>
<dbReference type="EMBL" id="S38100">
    <property type="protein sequence ID" value="AAB22254.1"/>
    <property type="molecule type" value="mRNA"/>
</dbReference>
<dbReference type="EMBL" id="M95200">
    <property type="protein sequence ID" value="AAA40547.1"/>
    <property type="molecule type" value="mRNA"/>
</dbReference>
<dbReference type="EMBL" id="U50279">
    <property type="protein sequence ID" value="AAC05442.1"/>
    <property type="molecule type" value="mRNA"/>
</dbReference>
<dbReference type="EMBL" id="AY263146">
    <property type="protein sequence ID" value="AAP86647.1"/>
    <property type="molecule type" value="mRNA"/>
</dbReference>
<dbReference type="EMBL" id="AC127690">
    <property type="status" value="NOT_ANNOTATED_CDS"/>
    <property type="molecule type" value="Genomic_DNA"/>
</dbReference>
<dbReference type="EMBL" id="BC061468">
    <property type="protein sequence ID" value="AAH61468.1"/>
    <property type="status" value="ALT_INIT"/>
    <property type="molecule type" value="mRNA"/>
</dbReference>
<dbReference type="EMBL" id="AY707864">
    <property type="protein sequence ID" value="AAU11325.1"/>
    <property type="molecule type" value="mRNA"/>
</dbReference>
<dbReference type="EMBL" id="AY750956">
    <property type="protein sequence ID" value="AAU95484.1"/>
    <property type="molecule type" value="mRNA"/>
</dbReference>
<dbReference type="EMBL" id="AY750957">
    <property type="protein sequence ID" value="AAU95485.1"/>
    <property type="molecule type" value="mRNA"/>
</dbReference>
<dbReference type="EMBL" id="U41383">
    <property type="status" value="NOT_ANNOTATED_CDS"/>
    <property type="molecule type" value="Genomic_DNA"/>
</dbReference>
<dbReference type="CCDS" id="CCDS28816.2">
    <molecule id="Q00731-7"/>
</dbReference>
<dbReference type="CCDS" id="CCDS28818.2">
    <molecule id="Q00731-6"/>
</dbReference>
<dbReference type="CCDS" id="CCDS70817.1">
    <molecule id="Q00731-3"/>
</dbReference>
<dbReference type="PIR" id="A44881">
    <property type="entry name" value="A44881"/>
</dbReference>
<dbReference type="PIR" id="B44881">
    <property type="entry name" value="B44881"/>
</dbReference>
<dbReference type="RefSeq" id="NP_001020421.2">
    <molecule id="Q00731-7"/>
    <property type="nucleotide sequence ID" value="NM_001025250.3"/>
</dbReference>
<dbReference type="RefSeq" id="NP_001020428.2">
    <property type="nucleotide sequence ID" value="NM_001025257.3"/>
</dbReference>
<dbReference type="RefSeq" id="NP_001103736.1">
    <property type="nucleotide sequence ID" value="NM_001110266.1"/>
</dbReference>
<dbReference type="RefSeq" id="NP_001103737.1">
    <property type="nucleotide sequence ID" value="NM_001110267.1"/>
</dbReference>
<dbReference type="RefSeq" id="NP_001103738.1">
    <property type="nucleotide sequence ID" value="NM_001110268.1"/>
</dbReference>
<dbReference type="RefSeq" id="NP_001273985.1">
    <molecule id="Q00731-1"/>
    <property type="nucleotide sequence ID" value="NM_001287056.1"/>
</dbReference>
<dbReference type="RefSeq" id="NP_001273986.1">
    <molecule id="Q00731-2"/>
    <property type="nucleotide sequence ID" value="NM_001287057.1"/>
</dbReference>
<dbReference type="RefSeq" id="NP_001273987.1">
    <molecule id="Q00731-3"/>
    <property type="nucleotide sequence ID" value="NM_001287058.1"/>
</dbReference>
<dbReference type="RefSeq" id="NP_001303970.1">
    <property type="nucleotide sequence ID" value="NM_001317041.1"/>
</dbReference>
<dbReference type="RefSeq" id="NP_033531.3">
    <molecule id="Q00731-6"/>
    <property type="nucleotide sequence ID" value="NM_009505.4"/>
</dbReference>
<dbReference type="SMR" id="Q00731"/>
<dbReference type="BioGRID" id="204512">
    <property type="interactions" value="8"/>
</dbReference>
<dbReference type="ComplexPortal" id="CPX-3160">
    <property type="entry name" value="Vascular endothelial growth factor A complex"/>
</dbReference>
<dbReference type="CORUM" id="Q00731"/>
<dbReference type="DIP" id="DIP-31909N"/>
<dbReference type="FunCoup" id="Q00731">
    <property type="interactions" value="1067"/>
</dbReference>
<dbReference type="IntAct" id="Q00731">
    <property type="interactions" value="2"/>
</dbReference>
<dbReference type="STRING" id="10090.ENSMUSP00000115883"/>
<dbReference type="GlyCosmos" id="Q00731">
    <property type="glycosylation" value="1 site, No reported glycans"/>
</dbReference>
<dbReference type="GlyGen" id="Q00731">
    <property type="glycosylation" value="1 site"/>
</dbReference>
<dbReference type="iPTMnet" id="Q00731"/>
<dbReference type="PhosphoSitePlus" id="Q00731"/>
<dbReference type="PaxDb" id="10090-ENSMUSP00000115883"/>
<dbReference type="ProteomicsDB" id="297539">
    <molecule id="Q00731-1"/>
</dbReference>
<dbReference type="ProteomicsDB" id="297540">
    <molecule id="Q00731-2"/>
</dbReference>
<dbReference type="ProteomicsDB" id="297541">
    <molecule id="Q00731-3"/>
</dbReference>
<dbReference type="ProteomicsDB" id="297542">
    <molecule id="Q00731-4"/>
</dbReference>
<dbReference type="ProteomicsDB" id="297543">
    <molecule id="Q00731-5"/>
</dbReference>
<dbReference type="ProteomicsDB" id="297544">
    <molecule id="Q00731-6"/>
</dbReference>
<dbReference type="ProteomicsDB" id="304233"/>
<dbReference type="Antibodypedia" id="3956">
    <property type="antibodies" value="2841 antibodies from 55 providers"/>
</dbReference>
<dbReference type="DNASU" id="22339"/>
<dbReference type="Ensembl" id="ENSMUST00000024747.14">
    <molecule id="Q00731-3"/>
    <property type="protein sequence ID" value="ENSMUSP00000024747.8"/>
    <property type="gene ID" value="ENSMUSG00000023951.19"/>
</dbReference>
<dbReference type="Ensembl" id="ENSMUST00000071648.12">
    <molecule id="Q00731-6"/>
    <property type="protein sequence ID" value="ENSMUSP00000071575.6"/>
    <property type="gene ID" value="ENSMUSG00000023951.19"/>
</dbReference>
<dbReference type="Ensembl" id="ENSMUST00000142351.9">
    <molecule id="Q00731-7"/>
    <property type="protein sequence ID" value="ENSMUSP00000115883.3"/>
    <property type="gene ID" value="ENSMUSG00000023951.19"/>
</dbReference>
<dbReference type="GeneID" id="22339"/>
<dbReference type="KEGG" id="mmu:22339"/>
<dbReference type="UCSC" id="uc008crn.4">
    <molecule id="Q00731-7"/>
    <property type="organism name" value="mouse"/>
</dbReference>
<dbReference type="UCSC" id="uc008cro.4">
    <molecule id="Q00731-2"/>
    <property type="organism name" value="mouse"/>
</dbReference>
<dbReference type="UCSC" id="uc008crp.4">
    <molecule id="Q00731-3"/>
    <property type="organism name" value="mouse"/>
</dbReference>
<dbReference type="UCSC" id="uc008crr.3">
    <molecule id="Q00731-5"/>
    <property type="organism name" value="mouse"/>
</dbReference>
<dbReference type="AGR" id="MGI:103178"/>
<dbReference type="CTD" id="7422"/>
<dbReference type="MGI" id="MGI:103178">
    <property type="gene designation" value="Vegfa"/>
</dbReference>
<dbReference type="VEuPathDB" id="HostDB:ENSMUSG00000023951"/>
<dbReference type="eggNOG" id="ENOG502QVI8">
    <property type="taxonomic scope" value="Eukaryota"/>
</dbReference>
<dbReference type="GeneTree" id="ENSGT00940000157284"/>
<dbReference type="HOGENOM" id="CLU_042996_3_0_1"/>
<dbReference type="InParanoid" id="Q00731"/>
<dbReference type="OMA" id="EXIMRIK"/>
<dbReference type="OrthoDB" id="6370328at2759"/>
<dbReference type="PhylomeDB" id="Q00731"/>
<dbReference type="TreeFam" id="TF319554"/>
<dbReference type="Reactome" id="R-MMU-114608">
    <property type="pathway name" value="Platelet degranulation"/>
</dbReference>
<dbReference type="Reactome" id="R-MMU-194313">
    <property type="pathway name" value="VEGF ligand-receptor interactions"/>
</dbReference>
<dbReference type="Reactome" id="R-MMU-195399">
    <property type="pathway name" value="VEGF binds to VEGFR leading to receptor dimerization"/>
</dbReference>
<dbReference type="Reactome" id="R-MMU-4420097">
    <property type="pathway name" value="VEGFA-VEGFR2 Pathway"/>
</dbReference>
<dbReference type="Reactome" id="R-MMU-5218921">
    <property type="pathway name" value="VEGFR2 mediated cell proliferation"/>
</dbReference>
<dbReference type="BioGRID-ORCS" id="22339">
    <property type="hits" value="5 hits in 85 CRISPR screens"/>
</dbReference>
<dbReference type="ChiTaRS" id="Vegfa">
    <property type="organism name" value="mouse"/>
</dbReference>
<dbReference type="PRO" id="PR:Q00731"/>
<dbReference type="Proteomes" id="UP000000589">
    <property type="component" value="Chromosome 17"/>
</dbReference>
<dbReference type="RNAct" id="Q00731">
    <property type="molecule type" value="protein"/>
</dbReference>
<dbReference type="Bgee" id="ENSMUSG00000023951">
    <property type="expression patterns" value="Expressed in retinal neural layer and 295 other cell types or tissues"/>
</dbReference>
<dbReference type="ExpressionAtlas" id="Q00731">
    <property type="expression patterns" value="baseline and differential"/>
</dbReference>
<dbReference type="GO" id="GO:0005912">
    <property type="term" value="C:adherens junction"/>
    <property type="evidence" value="ECO:0007669"/>
    <property type="project" value="Ensembl"/>
</dbReference>
<dbReference type="GO" id="GO:0009986">
    <property type="term" value="C:cell surface"/>
    <property type="evidence" value="ECO:0000250"/>
    <property type="project" value="UniProtKB"/>
</dbReference>
<dbReference type="GO" id="GO:0005737">
    <property type="term" value="C:cytoplasm"/>
    <property type="evidence" value="ECO:0000314"/>
    <property type="project" value="MGI"/>
</dbReference>
<dbReference type="GO" id="GO:0005783">
    <property type="term" value="C:endoplasmic reticulum"/>
    <property type="evidence" value="ECO:0007669"/>
    <property type="project" value="UniProtKB-SubCell"/>
</dbReference>
<dbReference type="GO" id="GO:0005576">
    <property type="term" value="C:extracellular region"/>
    <property type="evidence" value="ECO:0000314"/>
    <property type="project" value="MGI"/>
</dbReference>
<dbReference type="GO" id="GO:0005615">
    <property type="term" value="C:extracellular space"/>
    <property type="evidence" value="ECO:0000314"/>
    <property type="project" value="MGI"/>
</dbReference>
<dbReference type="GO" id="GO:0005794">
    <property type="term" value="C:Golgi apparatus"/>
    <property type="evidence" value="ECO:0007669"/>
    <property type="project" value="UniProtKB-SubCell"/>
</dbReference>
<dbReference type="GO" id="GO:0005634">
    <property type="term" value="C:nucleus"/>
    <property type="evidence" value="ECO:0000314"/>
    <property type="project" value="MGI"/>
</dbReference>
<dbReference type="GO" id="GO:0005886">
    <property type="term" value="C:plasma membrane"/>
    <property type="evidence" value="ECO:0007669"/>
    <property type="project" value="UniProtKB-SubCell"/>
</dbReference>
<dbReference type="GO" id="GO:0030141">
    <property type="term" value="C:secretory granule"/>
    <property type="evidence" value="ECO:0000250"/>
    <property type="project" value="UniProtKB"/>
</dbReference>
<dbReference type="GO" id="GO:1990150">
    <property type="term" value="C:VEGF-A complex"/>
    <property type="evidence" value="ECO:0007669"/>
    <property type="project" value="Ensembl"/>
</dbReference>
<dbReference type="GO" id="GO:0042056">
    <property type="term" value="F:chemoattractant activity"/>
    <property type="evidence" value="ECO:0000314"/>
    <property type="project" value="BHF-UCL"/>
</dbReference>
<dbReference type="GO" id="GO:0005125">
    <property type="term" value="F:cytokine activity"/>
    <property type="evidence" value="ECO:0000250"/>
    <property type="project" value="UniProtKB"/>
</dbReference>
<dbReference type="GO" id="GO:0050840">
    <property type="term" value="F:extracellular matrix binding"/>
    <property type="evidence" value="ECO:0000314"/>
    <property type="project" value="MGI"/>
</dbReference>
<dbReference type="GO" id="GO:0001968">
    <property type="term" value="F:fibronectin binding"/>
    <property type="evidence" value="ECO:0000250"/>
    <property type="project" value="UniProtKB"/>
</dbReference>
<dbReference type="GO" id="GO:0008083">
    <property type="term" value="F:growth factor activity"/>
    <property type="evidence" value="ECO:0000314"/>
    <property type="project" value="MGI"/>
</dbReference>
<dbReference type="GO" id="GO:0008201">
    <property type="term" value="F:heparin binding"/>
    <property type="evidence" value="ECO:0000314"/>
    <property type="project" value="MGI"/>
</dbReference>
<dbReference type="GO" id="GO:0042802">
    <property type="term" value="F:identical protein binding"/>
    <property type="evidence" value="ECO:0007669"/>
    <property type="project" value="Ensembl"/>
</dbReference>
<dbReference type="GO" id="GO:0005161">
    <property type="term" value="F:platelet-derived growth factor receptor binding"/>
    <property type="evidence" value="ECO:0000250"/>
    <property type="project" value="UniProtKB"/>
</dbReference>
<dbReference type="GO" id="GO:0048018">
    <property type="term" value="F:receptor ligand activity"/>
    <property type="evidence" value="ECO:0000250"/>
    <property type="project" value="UniProtKB"/>
</dbReference>
<dbReference type="GO" id="GO:0005102">
    <property type="term" value="F:signaling receptor binding"/>
    <property type="evidence" value="ECO:0000314"/>
    <property type="project" value="MGI"/>
</dbReference>
<dbReference type="GO" id="GO:0030297">
    <property type="term" value="F:transmembrane receptor protein tyrosine kinase activator activity"/>
    <property type="evidence" value="ECO:0007669"/>
    <property type="project" value="Ensembl"/>
</dbReference>
<dbReference type="GO" id="GO:0043183">
    <property type="term" value="F:vascular endothelial growth factor receptor 1 binding"/>
    <property type="evidence" value="ECO:0000314"/>
    <property type="project" value="MGI"/>
</dbReference>
<dbReference type="GO" id="GO:0043184">
    <property type="term" value="F:vascular endothelial growth factor receptor 2 binding"/>
    <property type="evidence" value="ECO:0000314"/>
    <property type="project" value="MGI"/>
</dbReference>
<dbReference type="GO" id="GO:0005172">
    <property type="term" value="F:vascular endothelial growth factor receptor binding"/>
    <property type="evidence" value="ECO:0000250"/>
    <property type="project" value="UniProtKB"/>
</dbReference>
<dbReference type="GO" id="GO:0001525">
    <property type="term" value="P:angiogenesis"/>
    <property type="evidence" value="ECO:0000314"/>
    <property type="project" value="MGI"/>
</dbReference>
<dbReference type="GO" id="GO:0006915">
    <property type="term" value="P:apoptotic process"/>
    <property type="evidence" value="ECO:0000315"/>
    <property type="project" value="MGI"/>
</dbReference>
<dbReference type="GO" id="GO:0048844">
    <property type="term" value="P:artery morphogenesis"/>
    <property type="evidence" value="ECO:0000315"/>
    <property type="project" value="MGI"/>
</dbReference>
<dbReference type="GO" id="GO:0001568">
    <property type="term" value="P:blood vessel development"/>
    <property type="evidence" value="ECO:0000315"/>
    <property type="project" value="MGI"/>
</dbReference>
<dbReference type="GO" id="GO:0048514">
    <property type="term" value="P:blood vessel morphogenesis"/>
    <property type="evidence" value="ECO:0000314"/>
    <property type="project" value="MGI"/>
</dbReference>
<dbReference type="GO" id="GO:0060346">
    <property type="term" value="P:bone trabecula formation"/>
    <property type="evidence" value="ECO:0000315"/>
    <property type="project" value="MGI"/>
</dbReference>
<dbReference type="GO" id="GO:0061430">
    <property type="term" value="P:bone trabecula morphogenesis"/>
    <property type="evidence" value="ECO:0000315"/>
    <property type="project" value="MGI"/>
</dbReference>
<dbReference type="GO" id="GO:0001569">
    <property type="term" value="P:branching involved in blood vessel morphogenesis"/>
    <property type="evidence" value="ECO:0000315"/>
    <property type="project" value="MGI"/>
</dbReference>
<dbReference type="GO" id="GO:0048754">
    <property type="term" value="P:branching morphogenesis of an epithelial tube"/>
    <property type="evidence" value="ECO:0000314"/>
    <property type="project" value="MGI"/>
</dbReference>
<dbReference type="GO" id="GO:0048593">
    <property type="term" value="P:camera-type eye morphogenesis"/>
    <property type="evidence" value="ECO:0000315"/>
    <property type="project" value="MGI"/>
</dbReference>
<dbReference type="GO" id="GO:0055013">
    <property type="term" value="P:cardiac muscle cell development"/>
    <property type="evidence" value="ECO:0000315"/>
    <property type="project" value="MGI"/>
</dbReference>
<dbReference type="GO" id="GO:0060948">
    <property type="term" value="P:cardiac vascular smooth muscle cell development"/>
    <property type="evidence" value="ECO:0000315"/>
    <property type="project" value="BHF-UCL"/>
</dbReference>
<dbReference type="GO" id="GO:0016477">
    <property type="term" value="P:cell migration"/>
    <property type="evidence" value="ECO:0000314"/>
    <property type="project" value="MGI"/>
</dbReference>
<dbReference type="GO" id="GO:0002042">
    <property type="term" value="P:cell migration involved in sprouting angiogenesis"/>
    <property type="evidence" value="ECO:0000250"/>
    <property type="project" value="UniProtKB"/>
</dbReference>
<dbReference type="GO" id="GO:0008283">
    <property type="term" value="P:cell population proliferation"/>
    <property type="evidence" value="ECO:0000315"/>
    <property type="project" value="MGI"/>
</dbReference>
<dbReference type="GO" id="GO:0098609">
    <property type="term" value="P:cell-cell adhesion"/>
    <property type="evidence" value="ECO:0000316"/>
    <property type="project" value="MGI"/>
</dbReference>
<dbReference type="GO" id="GO:0071456">
    <property type="term" value="P:cellular response to hypoxia"/>
    <property type="evidence" value="ECO:0000250"/>
    <property type="project" value="UniProtKB"/>
</dbReference>
<dbReference type="GO" id="GO:0035924">
    <property type="term" value="P:cellular response to vascular endothelial growth factor stimulus"/>
    <property type="evidence" value="ECO:0000316"/>
    <property type="project" value="BHF-UCL"/>
</dbReference>
<dbReference type="GO" id="GO:0097533">
    <property type="term" value="P:cellular stress response to acid chemical"/>
    <property type="evidence" value="ECO:0007669"/>
    <property type="project" value="Ensembl"/>
</dbReference>
<dbReference type="GO" id="GO:0071679">
    <property type="term" value="P:commissural neuron axon guidance"/>
    <property type="evidence" value="ECO:0000314"/>
    <property type="project" value="BHF-UCL"/>
</dbReference>
<dbReference type="GO" id="GO:0060982">
    <property type="term" value="P:coronary artery morphogenesis"/>
    <property type="evidence" value="ECO:0000315"/>
    <property type="project" value="BHF-UCL"/>
</dbReference>
<dbReference type="GO" id="GO:0003169">
    <property type="term" value="P:coronary vein morphogenesis"/>
    <property type="evidence" value="ECO:0000315"/>
    <property type="project" value="BHF-UCL"/>
</dbReference>
<dbReference type="GO" id="GO:0071542">
    <property type="term" value="P:dopaminergic neuron differentiation"/>
    <property type="evidence" value="ECO:0000316"/>
    <property type="project" value="MGI"/>
</dbReference>
<dbReference type="GO" id="GO:0035767">
    <property type="term" value="P:endothelial cell chemotaxis"/>
    <property type="evidence" value="ECO:0000250"/>
    <property type="project" value="UniProtKB"/>
</dbReference>
<dbReference type="GO" id="GO:0043542">
    <property type="term" value="P:endothelial cell migration"/>
    <property type="evidence" value="ECO:0000315"/>
    <property type="project" value="MGI"/>
</dbReference>
<dbReference type="GO" id="GO:0001935">
    <property type="term" value="P:endothelial cell proliferation"/>
    <property type="evidence" value="ECO:0000314"/>
    <property type="project" value="MGI"/>
</dbReference>
<dbReference type="GO" id="GO:0030855">
    <property type="term" value="P:epithelial cell differentiation"/>
    <property type="evidence" value="ECO:0000315"/>
    <property type="project" value="MGI"/>
</dbReference>
<dbReference type="GO" id="GO:0002070">
    <property type="term" value="P:epithelial cell maturation"/>
    <property type="evidence" value="ECO:0000315"/>
    <property type="project" value="MGI"/>
</dbReference>
<dbReference type="GO" id="GO:0050673">
    <property type="term" value="P:epithelial cell proliferation"/>
    <property type="evidence" value="ECO:0000315"/>
    <property type="project" value="MGI"/>
</dbReference>
<dbReference type="GO" id="GO:0042462">
    <property type="term" value="P:eye photoreceptor cell development"/>
    <property type="evidence" value="ECO:0000315"/>
    <property type="project" value="MGI"/>
</dbReference>
<dbReference type="GO" id="GO:0003007">
    <property type="term" value="P:heart morphogenesis"/>
    <property type="evidence" value="ECO:0000315"/>
    <property type="project" value="MGI"/>
</dbReference>
<dbReference type="GO" id="GO:0048873">
    <property type="term" value="P:homeostasis of number of cells within a tissue"/>
    <property type="evidence" value="ECO:0000315"/>
    <property type="project" value="MGI"/>
</dbReference>
<dbReference type="GO" id="GO:0001701">
    <property type="term" value="P:in utero embryonic development"/>
    <property type="evidence" value="ECO:0000315"/>
    <property type="project" value="MGI"/>
</dbReference>
<dbReference type="GO" id="GO:0001822">
    <property type="term" value="P:kidney development"/>
    <property type="evidence" value="ECO:0000315"/>
    <property type="project" value="MGI"/>
</dbReference>
<dbReference type="GO" id="GO:0007595">
    <property type="term" value="P:lactation"/>
    <property type="evidence" value="ECO:0000315"/>
    <property type="project" value="MGI"/>
</dbReference>
<dbReference type="GO" id="GO:0030324">
    <property type="term" value="P:lung development"/>
    <property type="evidence" value="ECO:0000314"/>
    <property type="project" value="MGI"/>
</dbReference>
<dbReference type="GO" id="GO:0060426">
    <property type="term" value="P:lung vasculature development"/>
    <property type="evidence" value="ECO:0000314"/>
    <property type="project" value="MGI"/>
</dbReference>
<dbReference type="GO" id="GO:0036303">
    <property type="term" value="P:lymph vessel morphogenesis"/>
    <property type="evidence" value="ECO:0000315"/>
    <property type="project" value="BHF-UCL"/>
</dbReference>
<dbReference type="GO" id="GO:0001946">
    <property type="term" value="P:lymphangiogenesis"/>
    <property type="evidence" value="ECO:0000314"/>
    <property type="project" value="MGI"/>
</dbReference>
<dbReference type="GO" id="GO:0030225">
    <property type="term" value="P:macrophage differentiation"/>
    <property type="evidence" value="ECO:0000250"/>
    <property type="project" value="UniProtKB"/>
</dbReference>
<dbReference type="GO" id="GO:0060749">
    <property type="term" value="P:mammary gland alveolus development"/>
    <property type="evidence" value="ECO:0000315"/>
    <property type="project" value="MGI"/>
</dbReference>
<dbReference type="GO" id="GO:0010463">
    <property type="term" value="P:mesenchymal cell proliferation"/>
    <property type="evidence" value="ECO:0000314"/>
    <property type="project" value="MGI"/>
</dbReference>
<dbReference type="GO" id="GO:0007498">
    <property type="term" value="P:mesoderm development"/>
    <property type="evidence" value="ECO:0000315"/>
    <property type="project" value="MGI"/>
</dbReference>
<dbReference type="GO" id="GO:0030224">
    <property type="term" value="P:monocyte differentiation"/>
    <property type="evidence" value="ECO:0000250"/>
    <property type="project" value="UniProtKB"/>
</dbReference>
<dbReference type="GO" id="GO:0097475">
    <property type="term" value="P:motor neuron migration"/>
    <property type="evidence" value="ECO:0000315"/>
    <property type="project" value="UniProtKB"/>
</dbReference>
<dbReference type="GO" id="GO:1903392">
    <property type="term" value="P:negative regulation of adherens junction organization"/>
    <property type="evidence" value="ECO:0007669"/>
    <property type="project" value="Ensembl"/>
</dbReference>
<dbReference type="GO" id="GO:0043066">
    <property type="term" value="P:negative regulation of apoptotic process"/>
    <property type="evidence" value="ECO:0000315"/>
    <property type="project" value="MGI"/>
</dbReference>
<dbReference type="GO" id="GO:1905604">
    <property type="term" value="P:negative regulation of blood-brain barrier permeability"/>
    <property type="evidence" value="ECO:0007669"/>
    <property type="project" value="Ensembl"/>
</dbReference>
<dbReference type="GO" id="GO:0022408">
    <property type="term" value="P:negative regulation of cell-cell adhesion"/>
    <property type="evidence" value="ECO:0000316"/>
    <property type="project" value="MGI"/>
</dbReference>
<dbReference type="GO" id="GO:2000048">
    <property type="term" value="P:negative regulation of cell-cell adhesion mediated by cadherin"/>
    <property type="evidence" value="ECO:0007669"/>
    <property type="project" value="Ensembl"/>
</dbReference>
<dbReference type="GO" id="GO:0010719">
    <property type="term" value="P:negative regulation of epithelial to mesenchymal transition"/>
    <property type="evidence" value="ECO:0000315"/>
    <property type="project" value="BHF-UCL"/>
</dbReference>
<dbReference type="GO" id="GO:1903141">
    <property type="term" value="P:negative regulation of establishment of endothelial barrier"/>
    <property type="evidence" value="ECO:0007669"/>
    <property type="project" value="Ensembl"/>
</dbReference>
<dbReference type="GO" id="GO:2001237">
    <property type="term" value="P:negative regulation of extrinsic apoptotic signaling pathway"/>
    <property type="evidence" value="ECO:0000314"/>
    <property type="project" value="BHF-UCL"/>
</dbReference>
<dbReference type="GO" id="GO:0045599">
    <property type="term" value="P:negative regulation of fat cell differentiation"/>
    <property type="evidence" value="ECO:0000315"/>
    <property type="project" value="MGI"/>
</dbReference>
<dbReference type="GO" id="GO:0010629">
    <property type="term" value="P:negative regulation of gene expression"/>
    <property type="evidence" value="ECO:0000315"/>
    <property type="project" value="MGI"/>
</dbReference>
<dbReference type="GO" id="GO:0043524">
    <property type="term" value="P:negative regulation of neuron apoptotic process"/>
    <property type="evidence" value="ECO:0000314"/>
    <property type="project" value="BHF-UCL"/>
</dbReference>
<dbReference type="GO" id="GO:0000122">
    <property type="term" value="P:negative regulation of transcription by RNA polymerase II"/>
    <property type="evidence" value="ECO:0007669"/>
    <property type="project" value="Ensembl"/>
</dbReference>
<dbReference type="GO" id="GO:0007405">
    <property type="term" value="P:neuroblast proliferation"/>
    <property type="evidence" value="ECO:0000316"/>
    <property type="project" value="MGI"/>
</dbReference>
<dbReference type="GO" id="GO:0048666">
    <property type="term" value="P:neuron development"/>
    <property type="evidence" value="ECO:0000315"/>
    <property type="project" value="BHF-UCL"/>
</dbReference>
<dbReference type="GO" id="GO:0003151">
    <property type="term" value="P:outflow tract morphogenesis"/>
    <property type="evidence" value="ECO:0000315"/>
    <property type="project" value="BHF-UCL"/>
</dbReference>
<dbReference type="GO" id="GO:0001541">
    <property type="term" value="P:ovarian follicle development"/>
    <property type="evidence" value="ECO:0000315"/>
    <property type="project" value="MGI"/>
</dbReference>
<dbReference type="GO" id="GO:0007200">
    <property type="term" value="P:phospholipase C-activating G protein-coupled receptor signaling pathway"/>
    <property type="evidence" value="ECO:0000250"/>
    <property type="project" value="UniProtKB"/>
</dbReference>
<dbReference type="GO" id="GO:0050918">
    <property type="term" value="P:positive chemotaxis"/>
    <property type="evidence" value="ECO:0000314"/>
    <property type="project" value="BHF-UCL"/>
</dbReference>
<dbReference type="GO" id="GO:0045766">
    <property type="term" value="P:positive regulation of angiogenesis"/>
    <property type="evidence" value="ECO:0000314"/>
    <property type="project" value="MGI"/>
</dbReference>
<dbReference type="GO" id="GO:0048842">
    <property type="term" value="P:positive regulation of axon extension involved in axon guidance"/>
    <property type="evidence" value="ECO:0000314"/>
    <property type="project" value="BHF-UCL"/>
</dbReference>
<dbReference type="GO" id="GO:1905555">
    <property type="term" value="P:positive regulation of blood vessel branching"/>
    <property type="evidence" value="ECO:0007669"/>
    <property type="project" value="Ensembl"/>
</dbReference>
<dbReference type="GO" id="GO:0043536">
    <property type="term" value="P:positive regulation of blood vessel endothelial cell migration"/>
    <property type="evidence" value="ECO:0000250"/>
    <property type="project" value="UniProtKB"/>
</dbReference>
<dbReference type="GO" id="GO:1903589">
    <property type="term" value="P:positive regulation of blood vessel endothelial cell proliferation involved in sprouting angiogenesis"/>
    <property type="evidence" value="ECO:0007669"/>
    <property type="project" value="Ensembl"/>
</dbReference>
<dbReference type="GO" id="GO:0090190">
    <property type="term" value="P:positive regulation of branching involved in ureteric bud morphogenesis"/>
    <property type="evidence" value="ECO:0000314"/>
    <property type="project" value="UniProtKB"/>
</dbReference>
<dbReference type="GO" id="GO:0045785">
    <property type="term" value="P:positive regulation of cell adhesion"/>
    <property type="evidence" value="ECO:0000250"/>
    <property type="project" value="UniProtKB"/>
</dbReference>
<dbReference type="GO" id="GO:0051781">
    <property type="term" value="P:positive regulation of cell division"/>
    <property type="evidence" value="ECO:0007669"/>
    <property type="project" value="UniProtKB-KW"/>
</dbReference>
<dbReference type="GO" id="GO:0090050">
    <property type="term" value="P:positive regulation of cell migration involved in sprouting angiogenesis"/>
    <property type="evidence" value="ECO:0000250"/>
    <property type="project" value="UniProtKB"/>
</dbReference>
<dbReference type="GO" id="GO:0008284">
    <property type="term" value="P:positive regulation of cell population proliferation"/>
    <property type="evidence" value="ECO:0000314"/>
    <property type="project" value="MGI"/>
</dbReference>
<dbReference type="GO" id="GO:0038091">
    <property type="term" value="P:positive regulation of cell proliferation by VEGF-activated platelet derived growth factor receptor signaling pathway"/>
    <property type="evidence" value="ECO:0000250"/>
    <property type="project" value="UniProtKB"/>
</dbReference>
<dbReference type="GO" id="GO:0120162">
    <property type="term" value="P:positive regulation of cold-induced thermogenesis"/>
    <property type="evidence" value="ECO:0000315"/>
    <property type="project" value="YuBioLab"/>
</dbReference>
<dbReference type="GO" id="GO:0038033">
    <property type="term" value="P:positive regulation of endothelial cell chemotaxis by VEGF-activated vascular endothelial growth factor receptor signaling pathway"/>
    <property type="evidence" value="ECO:0007669"/>
    <property type="project" value="Ensembl"/>
</dbReference>
<dbReference type="GO" id="GO:0010595">
    <property type="term" value="P:positive regulation of endothelial cell migration"/>
    <property type="evidence" value="ECO:0000250"/>
    <property type="project" value="UniProtKB"/>
</dbReference>
<dbReference type="GO" id="GO:0001938">
    <property type="term" value="P:positive regulation of endothelial cell proliferation"/>
    <property type="evidence" value="ECO:0000314"/>
    <property type="project" value="MGI"/>
</dbReference>
<dbReference type="GO" id="GO:0050679">
    <property type="term" value="P:positive regulation of epithelial cell proliferation"/>
    <property type="evidence" value="ECO:0000315"/>
    <property type="project" value="MGI"/>
</dbReference>
<dbReference type="GO" id="GO:0070374">
    <property type="term" value="P:positive regulation of ERK1 and ERK2 cascade"/>
    <property type="evidence" value="ECO:0000314"/>
    <property type="project" value="BHF-UCL"/>
</dbReference>
<dbReference type="GO" id="GO:0051894">
    <property type="term" value="P:positive regulation of focal adhesion assembly"/>
    <property type="evidence" value="ECO:0000250"/>
    <property type="project" value="UniProtKB"/>
</dbReference>
<dbReference type="GO" id="GO:1901492">
    <property type="term" value="P:positive regulation of lymphangiogenesis"/>
    <property type="evidence" value="ECO:0000314"/>
    <property type="project" value="MGI"/>
</dbReference>
<dbReference type="GO" id="GO:0043410">
    <property type="term" value="P:positive regulation of MAPK cascade"/>
    <property type="evidence" value="ECO:0000250"/>
    <property type="project" value="UniProtKB"/>
</dbReference>
<dbReference type="GO" id="GO:0002053">
    <property type="term" value="P:positive regulation of mesenchymal cell proliferation"/>
    <property type="evidence" value="ECO:0000314"/>
    <property type="project" value="MGI"/>
</dbReference>
<dbReference type="GO" id="GO:0002052">
    <property type="term" value="P:positive regulation of neuroblast proliferation"/>
    <property type="evidence" value="ECO:0000316"/>
    <property type="project" value="MGI"/>
</dbReference>
<dbReference type="GO" id="GO:0045669">
    <property type="term" value="P:positive regulation of osteoblast differentiation"/>
    <property type="evidence" value="ECO:0000315"/>
    <property type="project" value="MGI"/>
</dbReference>
<dbReference type="GO" id="GO:0051897">
    <property type="term" value="P:positive regulation of phosphatidylinositol 3-kinase/protein kinase B signal transduction"/>
    <property type="evidence" value="ECO:0000314"/>
    <property type="project" value="BHF-UCL"/>
</dbReference>
<dbReference type="GO" id="GO:0050927">
    <property type="term" value="P:positive regulation of positive chemotaxis"/>
    <property type="evidence" value="ECO:0000250"/>
    <property type="project" value="UniProtKB"/>
</dbReference>
<dbReference type="GO" id="GO:0001934">
    <property type="term" value="P:positive regulation of protein phosphorylation"/>
    <property type="evidence" value="ECO:0000250"/>
    <property type="project" value="UniProtKB"/>
</dbReference>
<dbReference type="GO" id="GO:0031334">
    <property type="term" value="P:positive regulation of protein-containing complex assembly"/>
    <property type="evidence" value="ECO:0000250"/>
    <property type="project" value="UniProtKB"/>
</dbReference>
<dbReference type="GO" id="GO:0002092">
    <property type="term" value="P:positive regulation of receptor internalization"/>
    <property type="evidence" value="ECO:0000250"/>
    <property type="project" value="UniProtKB"/>
</dbReference>
<dbReference type="GO" id="GO:1903672">
    <property type="term" value="P:positive regulation of sprouting angiogenesis"/>
    <property type="evidence" value="ECO:0007669"/>
    <property type="project" value="Ensembl"/>
</dbReference>
<dbReference type="GO" id="GO:2000648">
    <property type="term" value="P:positive regulation of stem cell proliferation"/>
    <property type="evidence" value="ECO:0000314"/>
    <property type="project" value="MGI"/>
</dbReference>
<dbReference type="GO" id="GO:0045944">
    <property type="term" value="P:positive regulation of transcription by RNA polymerase II"/>
    <property type="evidence" value="ECO:0000250"/>
    <property type="project" value="UniProtKB"/>
</dbReference>
<dbReference type="GO" id="GO:1901165">
    <property type="term" value="P:positive regulation of trophoblast cell migration"/>
    <property type="evidence" value="ECO:0007669"/>
    <property type="project" value="Ensembl"/>
</dbReference>
<dbReference type="GO" id="GO:1900748">
    <property type="term" value="P:positive regulation of vascular endothelial growth factor signaling pathway"/>
    <property type="evidence" value="ECO:0007669"/>
    <property type="project" value="Ensembl"/>
</dbReference>
<dbReference type="GO" id="GO:0043117">
    <property type="term" value="P:positive regulation of vascular permeability"/>
    <property type="evidence" value="ECO:0000314"/>
    <property type="project" value="MGI"/>
</dbReference>
<dbReference type="GO" id="GO:0031077">
    <property type="term" value="P:post-embryonic camera-type eye development"/>
    <property type="evidence" value="ECO:0000315"/>
    <property type="project" value="MGI"/>
</dbReference>
<dbReference type="GO" id="GO:0060319">
    <property type="term" value="P:primitive erythrocyte differentiation"/>
    <property type="evidence" value="ECO:0000315"/>
    <property type="project" value="MGI"/>
</dbReference>
<dbReference type="GO" id="GO:0008360">
    <property type="term" value="P:regulation of cell shape"/>
    <property type="evidence" value="ECO:0000250"/>
    <property type="project" value="UniProtKB"/>
</dbReference>
<dbReference type="GO" id="GO:0045601">
    <property type="term" value="P:regulation of endothelial cell differentiation"/>
    <property type="evidence" value="ECO:0000314"/>
    <property type="project" value="MGI"/>
</dbReference>
<dbReference type="GO" id="GO:0040008">
    <property type="term" value="P:regulation of growth"/>
    <property type="evidence" value="ECO:0000315"/>
    <property type="project" value="MGI"/>
</dbReference>
<dbReference type="GO" id="GO:1901532">
    <property type="term" value="P:regulation of hematopoietic progenitor cell differentiation"/>
    <property type="evidence" value="ECO:0000314"/>
    <property type="project" value="MGI"/>
</dbReference>
<dbReference type="GO" id="GO:0010749">
    <property type="term" value="P:regulation of nitric oxide mediated signal transduction"/>
    <property type="evidence" value="ECO:0000266"/>
    <property type="project" value="MGI"/>
</dbReference>
<dbReference type="GO" id="GO:0001666">
    <property type="term" value="P:response to hypoxia"/>
    <property type="evidence" value="ECO:0000250"/>
    <property type="project" value="UniProtKB"/>
</dbReference>
<dbReference type="GO" id="GO:0031290">
    <property type="term" value="P:retinal ganglion cell axon guidance"/>
    <property type="evidence" value="ECO:0000315"/>
    <property type="project" value="BHF-UCL"/>
</dbReference>
<dbReference type="GO" id="GO:0002040">
    <property type="term" value="P:sprouting angiogenesis"/>
    <property type="evidence" value="ECO:0000314"/>
    <property type="project" value="BHF-UCL"/>
</dbReference>
<dbReference type="GO" id="GO:0072089">
    <property type="term" value="P:stem cell proliferation"/>
    <property type="evidence" value="ECO:0000314"/>
    <property type="project" value="MGI"/>
</dbReference>
<dbReference type="GO" id="GO:0043129">
    <property type="term" value="P:surfactant homeostasis"/>
    <property type="evidence" value="ECO:0000315"/>
    <property type="project" value="MGI"/>
</dbReference>
<dbReference type="GO" id="GO:0035148">
    <property type="term" value="P:tube formation"/>
    <property type="evidence" value="ECO:0000250"/>
    <property type="project" value="UniProtKB"/>
</dbReference>
<dbReference type="GO" id="GO:0048010">
    <property type="term" value="P:vascular endothelial growth factor receptor signaling pathway"/>
    <property type="evidence" value="ECO:0000314"/>
    <property type="project" value="MGI"/>
</dbReference>
<dbReference type="GO" id="GO:0036324">
    <property type="term" value="P:vascular endothelial growth factor receptor-2 signaling pathway"/>
    <property type="evidence" value="ECO:0007669"/>
    <property type="project" value="Ensembl"/>
</dbReference>
<dbReference type="GO" id="GO:0061042">
    <property type="term" value="P:vascular wound healing"/>
    <property type="evidence" value="ECO:0007669"/>
    <property type="project" value="Ensembl"/>
</dbReference>
<dbReference type="GO" id="GO:0001944">
    <property type="term" value="P:vasculature development"/>
    <property type="evidence" value="ECO:0000315"/>
    <property type="project" value="MGI"/>
</dbReference>
<dbReference type="GO" id="GO:0042311">
    <property type="term" value="P:vasodilation"/>
    <property type="evidence" value="ECO:0000314"/>
    <property type="project" value="MGI"/>
</dbReference>
<dbReference type="GO" id="GO:0038190">
    <property type="term" value="P:VEGF-activated neuropilin signaling pathway"/>
    <property type="evidence" value="ECO:0000314"/>
    <property type="project" value="BHF-UCL"/>
</dbReference>
<dbReference type="CDD" id="cd00135">
    <property type="entry name" value="PDGF"/>
    <property type="match status" value="1"/>
</dbReference>
<dbReference type="FunFam" id="2.10.160.10:FF:000001">
    <property type="entry name" value="Vascular endothelial growth factor A"/>
    <property type="match status" value="1"/>
</dbReference>
<dbReference type="FunFam" id="2.10.90.10:FF:000009">
    <property type="entry name" value="Vascular endothelial growth factor A"/>
    <property type="match status" value="1"/>
</dbReference>
<dbReference type="Gene3D" id="2.10.90.10">
    <property type="entry name" value="Cystine-knot cytokines"/>
    <property type="match status" value="1"/>
</dbReference>
<dbReference type="Gene3D" id="2.10.160.10">
    <property type="entry name" value="Vascular endothelial growth factor, heparin-binding domain"/>
    <property type="match status" value="1"/>
</dbReference>
<dbReference type="InterPro" id="IPR029034">
    <property type="entry name" value="Cystine-knot_cytokine"/>
</dbReference>
<dbReference type="InterPro" id="IPR023581">
    <property type="entry name" value="PD_growth_factor_CS"/>
</dbReference>
<dbReference type="InterPro" id="IPR000072">
    <property type="entry name" value="PDGF/VEGF_dom"/>
</dbReference>
<dbReference type="InterPro" id="IPR050507">
    <property type="entry name" value="PDGF/VEGF_growth_factor"/>
</dbReference>
<dbReference type="InterPro" id="IPR027928">
    <property type="entry name" value="VEGF_C"/>
</dbReference>
<dbReference type="InterPro" id="IPR036841">
    <property type="entry name" value="VEGF_C_sf"/>
</dbReference>
<dbReference type="PANTHER" id="PTHR12025">
    <property type="entry name" value="VASCULAR ENDOTHELIAL GROWTH FACTOR"/>
    <property type="match status" value="1"/>
</dbReference>
<dbReference type="PANTHER" id="PTHR12025:SF5">
    <property type="entry name" value="VASCULAR ENDOTHELIAL GROWTH FACTOR A, LONG FORM"/>
    <property type="match status" value="1"/>
</dbReference>
<dbReference type="Pfam" id="PF00341">
    <property type="entry name" value="PDGF"/>
    <property type="match status" value="1"/>
</dbReference>
<dbReference type="Pfam" id="PF14554">
    <property type="entry name" value="VEGF_C"/>
    <property type="match status" value="1"/>
</dbReference>
<dbReference type="SMART" id="SM00141">
    <property type="entry name" value="PDGF"/>
    <property type="match status" value="1"/>
</dbReference>
<dbReference type="SUPFAM" id="SSF57501">
    <property type="entry name" value="Cystine-knot cytokines"/>
    <property type="match status" value="1"/>
</dbReference>
<dbReference type="SUPFAM" id="SSF57593">
    <property type="entry name" value="Heparin-binding domain from vascular endothelial growth factor"/>
    <property type="match status" value="1"/>
</dbReference>
<dbReference type="PROSITE" id="PS00249">
    <property type="entry name" value="PDGF_1"/>
    <property type="match status" value="1"/>
</dbReference>
<dbReference type="PROSITE" id="PS50278">
    <property type="entry name" value="PDGF_2"/>
    <property type="match status" value="1"/>
</dbReference>
<sequence>MTDRQTDTAPSPSAHLLAGGLPTVDAAASREEPKPAPGGGVEGVGARGIARKLFVQLLGSSRSVVAVVCAAGDKPIGAGRSASSGLEKPGPEKRGEEEKEEERGPQWALGSQEPSSWTGEAAVCADSAPAARAPQAPARASVPEGRGARQGAQESGLPRSPSRRGSASRAGPGRASETMNFLLSWVHWTLALLLYLHHAKWSQAAPTTEGEQKSHEVIKFMDVYQRSYCRPIETLVDIFQEYPDEIEYIFKPSCVPLMRCAGCCNDEALECVPTSESNITMQIMRIKPHQSQHIGEMSFLQHSRCECRPKKDRTKPEKKSVRGKGKGQKRKRKKSRFKSWSVHCEPCSERRKHLFVQDPQTCKCSCKNTDSRCKARQLELNERTCRCDKPRR</sequence>
<feature type="chain" id="PRO_0000458067" description="Vascular endothelial growth factor A, long form">
    <location>
        <begin position="1"/>
        <end position="392"/>
    </location>
</feature>
<feature type="chain" id="PRO_0000458068" description="N-VEGF" evidence="2">
    <location>
        <begin position="1"/>
        <end status="unknown"/>
    </location>
</feature>
<feature type="chain" id="PRO_0000458069" description="VEGFA" evidence="2">
    <location>
        <begin status="unknown"/>
        <end position="392"/>
    </location>
</feature>
<feature type="region of interest" description="Disordered" evidence="4">
    <location>
        <begin position="1"/>
        <end position="44"/>
    </location>
</feature>
<feature type="region of interest" description="Disordered" evidence="4">
    <location>
        <begin position="73"/>
        <end position="174"/>
    </location>
</feature>
<feature type="region of interest" description="Disordered" evidence="4">
    <location>
        <begin position="309"/>
        <end position="337"/>
    </location>
</feature>
<feature type="compositionally biased region" description="Basic and acidic residues" evidence="4">
    <location>
        <begin position="89"/>
        <end position="104"/>
    </location>
</feature>
<feature type="compositionally biased region" description="Low complexity" evidence="4">
    <location>
        <begin position="121"/>
        <end position="143"/>
    </location>
</feature>
<feature type="compositionally biased region" description="Low complexity" evidence="4">
    <location>
        <begin position="158"/>
        <end position="174"/>
    </location>
</feature>
<feature type="compositionally biased region" description="Basic and acidic residues" evidence="4">
    <location>
        <begin position="309"/>
        <end position="320"/>
    </location>
</feature>
<feature type="compositionally biased region" description="Basic residues" evidence="4">
    <location>
        <begin position="321"/>
        <end position="337"/>
    </location>
</feature>
<feature type="glycosylation site" description="N-linked (GlcNAc...) asparagine" evidence="16">
    <location>
        <position position="278"/>
    </location>
</feature>
<feature type="disulfide bond" evidence="1">
    <location>
        <begin position="229"/>
        <end position="271"/>
    </location>
</feature>
<feature type="disulfide bond" description="Interchain" evidence="1">
    <location>
        <position position="254"/>
    </location>
</feature>
<feature type="disulfide bond" evidence="1">
    <location>
        <begin position="260"/>
        <end position="305"/>
    </location>
</feature>
<feature type="disulfide bond" description="Interchain" evidence="1">
    <location>
        <position position="263"/>
    </location>
</feature>
<feature type="disulfide bond" evidence="1">
    <location>
        <begin position="264"/>
        <end position="307"/>
    </location>
</feature>
<feature type="splice variant" id="VSP_061904" description="In isoform VEGF-1, isoform VEGF-2, isoform VEGF-3, isoform VEGF-4 and isoform VEGF-5." evidence="7 10 13 14">
    <location>
        <begin position="1"/>
        <end position="178"/>
    </location>
</feature>
<feature type="splice variant" id="VSP_061905" description="In isoform VEGF-4." evidence="13">
    <original>IMRIKPHQSQHIGEMSFLQHSRCECRPKKDRTKPEKK</original>
    <variation>VGTCGTGDGAGAGGGRRTVVQGGALEGCLGLCLGNFW</variation>
    <location>
        <begin position="283"/>
        <end position="319"/>
    </location>
</feature>
<feature type="splice variant" id="VSP_061906" description="In isoform VEGF-5." evidence="14">
    <original>IMRIKPHQSQHIGEMSFLQHSRCE</original>
    <variation>VGTCGTGDGAGAGGAGGQWYKEGH</variation>
    <location>
        <begin position="283"/>
        <end position="306"/>
    </location>
</feature>
<feature type="splice variant" id="VSP_061907" description="In isoform VEGF-5." evidence="14">
    <location>
        <begin position="307"/>
        <end position="392"/>
    </location>
</feature>
<feature type="splice variant" id="VSP_061908" description="In isoform VEGF-1 and isoform L-VEGF-1." evidence="6 7 10">
    <original>KKSVRGKGKGQKRKRKKSRFKSWSV</original>
    <variation>N</variation>
    <location>
        <begin position="318"/>
        <end position="342"/>
    </location>
</feature>
<feature type="splice variant" id="VSP_061909" description="In isoform VEGF-2." evidence="7">
    <original>KSVRGK</original>
    <variation>CDKPRR</variation>
    <location>
        <begin position="319"/>
        <end position="324"/>
    </location>
</feature>
<feature type="splice variant" id="VSP_061910" description="In isoform VEGF-4." evidence="13">
    <location>
        <begin position="320"/>
        <end position="392"/>
    </location>
</feature>
<feature type="splice variant" id="VSP_061911" description="In isoform VEGF-2." evidence="7">
    <location>
        <begin position="325"/>
        <end position="392"/>
    </location>
</feature>
<feature type="sequence conflict" description="In Ref. 3; AAC05442." evidence="16" ref="3">
    <original>F</original>
    <variation>I</variation>
    <location>
        <position position="239"/>
    </location>
</feature>
<feature type="sequence conflict" description="In Ref. 2; AAA40547." evidence="16" ref="2">
    <original>GE</original>
    <variation>ER</variation>
    <location>
        <begin position="295"/>
        <end position="296"/>
    </location>
</feature>
<accession>Q00731</accession>
<accession>F8WH81</accession>
<accession>O70123</accession>
<accession>Q66S31</accession>
<accession>Q6GT23</accession>
<accession>Q6WZL9</accession>
<organism>
    <name type="scientific">Mus musculus</name>
    <name type="common">Mouse</name>
    <dbReference type="NCBI Taxonomy" id="10090"/>
    <lineage>
        <taxon>Eukaryota</taxon>
        <taxon>Metazoa</taxon>
        <taxon>Chordata</taxon>
        <taxon>Craniata</taxon>
        <taxon>Vertebrata</taxon>
        <taxon>Euteleostomi</taxon>
        <taxon>Mammalia</taxon>
        <taxon>Eutheria</taxon>
        <taxon>Euarchontoglires</taxon>
        <taxon>Glires</taxon>
        <taxon>Rodentia</taxon>
        <taxon>Myomorpha</taxon>
        <taxon>Muroidea</taxon>
        <taxon>Muridae</taxon>
        <taxon>Murinae</taxon>
        <taxon>Mus</taxon>
        <taxon>Mus</taxon>
    </lineage>
</organism>
<protein>
    <recommendedName>
        <fullName>Vascular endothelial growth factor A, long form</fullName>
        <shortName evidence="15">L-VEGF</shortName>
    </recommendedName>
    <alternativeName>
        <fullName>Vascular permeability factor</fullName>
        <shortName>VPF</shortName>
    </alternativeName>
    <component>
        <recommendedName>
            <fullName evidence="15">N-VEGF</fullName>
        </recommendedName>
    </component>
    <component>
        <recommendedName>
            <fullName evidence="15">VEGFA</fullName>
        </recommendedName>
    </component>
</protein>
<comment type="function">
    <molecule>N-VEGF</molecule>
    <text evidence="12">Participates in the induction of key genes involved in the response to hypoxia and in the induction of angiogenesis such as HIF1A (PubMed:35455969). Involved in protecting cells from hypoxia-mediated cell death (PubMed:35455969).</text>
</comment>
<comment type="function">
    <molecule>VEGFA</molecule>
    <text evidence="2 3 9 11">Growth factor active in angiogenesis, vasculogenesis and endothelial cell growth. Induces endothelial cell proliferation, promotes cell migration, inhibits apoptosis and induces permeabilization of blood vessels. Binds to the FLT1/VEGFR1 and KDR/VEGFR2 receptors, heparan sulfate and heparin. Binds to the NRP1/neuropilin-1 receptor. Binding to NRP1 receptor initiates a signaling pathway needed for motor neuron axon guidance and cell body migration, including for the caudal migration of facial motor neurons from rhombomere 4 to rhombomere 6 during embryonic development (PubMed:26503042). Also binds the DEAR/FBXW7-AS1 receptor (PubMed:16293765). May play a role in increasing vascular permeability during lactation, when increased transport of molecules from the blood is required for efficient milk protein synthesis (By similarity).</text>
</comment>
<comment type="subunit">
    <molecule>VEGFA</molecule>
    <text evidence="2 3 11">Homodimer; disulfide-linked (By similarity). Also found as heterodimer with PGF (By similarity). Interacts with NRP1 (PubMed:26503042). Interacts with isoform 2 of BSG (By similarity). Interacts with CD82; this interaction inhibits VEGFA-mediated signaling pathway (By similarity).</text>
</comment>
<comment type="subcellular location">
    <molecule>N-VEGF</molecule>
    <subcellularLocation>
        <location evidence="2">Cytoplasm</location>
    </subcellularLocation>
    <subcellularLocation>
        <location evidence="2">Nucleus</location>
    </subcellularLocation>
    <text evidence="2">Cytoplasmic in normoxic conditions and localizes to the nucleus under hypoxic conditions.</text>
</comment>
<comment type="subcellular location">
    <molecule>VEGFA</molecule>
    <subcellularLocation>
        <location evidence="2">Secreted</location>
    </subcellularLocation>
</comment>
<comment type="subcellular location">
    <molecule>Isoform L-VEGF-2</molecule>
    <subcellularLocation>
        <location evidence="2">Endoplasmic reticulum</location>
    </subcellularLocation>
    <subcellularLocation>
        <location evidence="2">Golgi apparatus</location>
    </subcellularLocation>
    <subcellularLocation>
        <location evidence="2">Secreted</location>
        <location evidence="2">Extracellular space</location>
        <location evidence="2">Extracellular matrix</location>
    </subcellularLocation>
</comment>
<comment type="subcellular location">
    <molecule>Isoform VEGF-1</molecule>
    <subcellularLocation>
        <location>Secreted</location>
    </subcellularLocation>
</comment>
<comment type="subcellular location">
    <molecule>Isoform VEGF-2</molecule>
    <subcellularLocation>
        <location>Secreted</location>
    </subcellularLocation>
</comment>
<comment type="subcellular location">
    <molecule>Isoform VEGF-3</molecule>
    <subcellularLocation>
        <location>Cell membrane</location>
        <topology>Peripheral membrane protein</topology>
    </subcellularLocation>
    <text>Remains cell-surface associated unless released by heparin.</text>
</comment>
<comment type="alternative products">
    <event type="alternative promoter"/>
    <event type="alternative splicing"/>
    <event type="alternative initiation"/>
    <isoform>
        <id>Q00731-7</id>
        <name>L-VEGF-2</name>
        <sequence type="displayed"/>
    </isoform>
    <isoform>
        <id>Q00731-1</id>
        <name>VEGF-3</name>
        <name>VEGF188</name>
        <sequence type="described" ref="VSP_061904"/>
    </isoform>
    <isoform>
        <id>Q00731-2</id>
        <name>VEGF-1</name>
        <name>VEGF164</name>
        <sequence type="described" ref="VSP_061904 VSP_061908"/>
    </isoform>
    <isoform>
        <id>Q00731-3</id>
        <name>VEGF-2</name>
        <name>VEGF120</name>
        <sequence type="described" ref="VSP_061904 VSP_061909 VSP_061911"/>
    </isoform>
    <isoform>
        <id>Q00731-4</id>
        <name>VEGF-4</name>
        <name>VEGF115</name>
        <sequence type="described" ref="VSP_061904 VSP_061905 VSP_061910"/>
    </isoform>
    <isoform>
        <id>Q00731-5</id>
        <name>VEGF-5</name>
        <name>VEGF102</name>
        <sequence type="described" ref="VSP_061904 VSP_061906 VSP_061907"/>
    </isoform>
    <isoform>
        <id>Q00731-6</id>
        <name>L-VEGF-1</name>
        <sequence type="described" ref="VSP_061908"/>
    </isoform>
    <text>A subset of isoforms are produced by use of an alternative upstream CUG codon, giving rise to long isoforms which have an N-terminal extension compared to the classical shorter AUG-initiated forms. These longer forms are post-translationally processed to produce an N-terminal N-VEGF chain and a C-terminal VEGFA chain.</text>
</comment>
<comment type="tissue specificity">
    <text>In developing embryos, expressed mainly in the choroid plexus, paraventricular neuroepithelium, placenta and kidney glomeruli. Also found in bronchial epithelium, adrenal gland and in seminiferous tubules of testis. High expression continues in kidney glomeruli and choroid plexus in adults.</text>
</comment>
<comment type="developmental stage">
    <text evidence="5">Levels increase during pregnancy (maximum 5.5-fold at 5 days) and a more marked increase occurs during lactation (maximal 9.7-fold at 7 days). Levels decrease progressively during the phase of involution.</text>
</comment>
<comment type="induction">
    <text evidence="8">By IL-6 and FSH in vitro.</text>
</comment>
<comment type="domain">
    <molecule>Isoform VEGF-3</molecule>
    <text>Contains a basic insert which acts as a cell retention signal.</text>
</comment>
<comment type="PTM">
    <molecule>Vascular endothelial growth factor A, long form</molecule>
    <text evidence="2">Produced by use of an alternative upstream CUG codon and post-translationally processed into the N-terminal N-VEGF form and the C-terminal secreted VEGFA form.</text>
</comment>
<comment type="miscellaneous">
    <molecule>Isoform L-VEGF-1</molecule>
    <text evidence="16">Produced by alternative promoter usage and alternative initiation. Starts at an alternative upstream CUG codon.</text>
</comment>
<comment type="similarity">
    <text evidence="16">Belongs to the PDGF/VEGF growth factor family.</text>
</comment>
<comment type="sequence caution" evidence="16">
    <conflict type="erroneous initiation">
        <sequence resource="EMBL-CDS" id="AAH61468"/>
    </conflict>
</comment>
<keyword id="KW-0024">Alternative initiation</keyword>
<keyword id="KW-0877">Alternative promoter usage</keyword>
<keyword id="KW-0025">Alternative splicing</keyword>
<keyword id="KW-0037">Angiogenesis</keyword>
<keyword id="KW-1003">Cell membrane</keyword>
<keyword id="KW-0963">Cytoplasm</keyword>
<keyword id="KW-0217">Developmental protein</keyword>
<keyword id="KW-0221">Differentiation</keyword>
<keyword id="KW-1015">Disulfide bond</keyword>
<keyword id="KW-0256">Endoplasmic reticulum</keyword>
<keyword id="KW-0272">Extracellular matrix</keyword>
<keyword id="KW-0325">Glycoprotein</keyword>
<keyword id="KW-0333">Golgi apparatus</keyword>
<keyword id="KW-0339">Growth factor</keyword>
<keyword id="KW-0358">Heparin-binding</keyword>
<keyword id="KW-0472">Membrane</keyword>
<keyword id="KW-0497">Mitogen</keyword>
<keyword id="KW-0539">Nucleus</keyword>
<keyword id="KW-1185">Reference proteome</keyword>
<keyword id="KW-0964">Secreted</keyword>
<proteinExistence type="evidence at protein level"/>
<evidence type="ECO:0000250" key="1"/>
<evidence type="ECO:0000250" key="2">
    <source>
        <dbReference type="UniProtKB" id="P15692"/>
    </source>
</evidence>
<evidence type="ECO:0000250" key="3">
    <source>
        <dbReference type="UniProtKB" id="P16612"/>
    </source>
</evidence>
<evidence type="ECO:0000256" key="4">
    <source>
        <dbReference type="SAM" id="MobiDB-lite"/>
    </source>
</evidence>
<evidence type="ECO:0000269" key="5">
    <source>
    </source>
</evidence>
<evidence type="ECO:0000269" key="6">
    <source>
    </source>
</evidence>
<evidence type="ECO:0000269" key="7">
    <source>
    </source>
</evidence>
<evidence type="ECO:0000269" key="8">
    <source>
    </source>
</evidence>
<evidence type="ECO:0000269" key="9">
    <source>
    </source>
</evidence>
<evidence type="ECO:0000269" key="10">
    <source>
    </source>
</evidence>
<evidence type="ECO:0000269" key="11">
    <source>
    </source>
</evidence>
<evidence type="ECO:0000269" key="12">
    <source>
    </source>
</evidence>
<evidence type="ECO:0000269" key="13">
    <source>
    </source>
</evidence>
<evidence type="ECO:0000269" key="14">
    <source ref="4"/>
</evidence>
<evidence type="ECO:0000303" key="15">
    <source>
    </source>
</evidence>
<evidence type="ECO:0000305" key="16"/>
<reference key="1">
    <citation type="journal article" date="1992" name="Development">
        <title>Expression of vascular endothelial growth factor during embryonic angiogenesis and endothelial cell differentiation.</title>
        <authorList>
            <person name="Breier G."/>
            <person name="Albrecht U."/>
            <person name="Sterrer S."/>
            <person name="Risau W."/>
        </authorList>
    </citation>
    <scope>NUCLEOTIDE SEQUENCE [MRNA] (ISOFORMS VEGF-1; VEGF-2 AND VEGF-3)</scope>
</reference>
<reference key="2">
    <citation type="journal article" date="1992" name="J. Biol. Chem.">
        <title>Vascular endothelial growth factor. Regulation by cell differentiation and activated second messenger pathways.</title>
        <authorList>
            <person name="Claffey K.P."/>
            <person name="Wilkison W.O."/>
            <person name="Spiegelman B.M."/>
        </authorList>
    </citation>
    <scope>NUCLEOTIDE SEQUENCE [MRNA] (ISOFORM VEGF-1)</scope>
</reference>
<reference key="3">
    <citation type="journal article" date="1998" name="J. Biol. Chem.">
        <title>A novel alternatively spliced form of murine vascular endothelial growth factor, VEGF 115.</title>
        <authorList>
            <person name="Sugihara T."/>
            <person name="Wadhwa R."/>
            <person name="Kaul S.C."/>
            <person name="Mitsui Y."/>
        </authorList>
    </citation>
    <scope>NUCLEOTIDE SEQUENCE [MRNA] (ISOFORM VEGF-4)</scope>
    <source>
        <strain>ICR</strain>
    </source>
</reference>
<reference key="4">
    <citation type="submission" date="2003-03" db="EMBL/GenBank/DDBJ databases">
        <title>Identification of a unique Mus musculus VEGF isoform of 102 amino acids.</title>
        <authorList>
            <person name="Jankowsky J.A."/>
            <person name="Adamski F.M."/>
            <person name="Robertson F.M."/>
        </authorList>
    </citation>
    <scope>NUCLEOTIDE SEQUENCE [MRNA] (ISOFORM VEGF-5)</scope>
    <source>
        <strain>FVB/N</strain>
    </source>
</reference>
<reference key="5">
    <citation type="journal article" date="2009" name="PLoS Biol.">
        <title>Lineage-specific biology revealed by a finished genome assembly of the mouse.</title>
        <authorList>
            <person name="Church D.M."/>
            <person name="Goodstadt L."/>
            <person name="Hillier L.W."/>
            <person name="Zody M.C."/>
            <person name="Goldstein S."/>
            <person name="She X."/>
            <person name="Bult C.J."/>
            <person name="Agarwala R."/>
            <person name="Cherry J.L."/>
            <person name="DiCuccio M."/>
            <person name="Hlavina W."/>
            <person name="Kapustin Y."/>
            <person name="Meric P."/>
            <person name="Maglott D."/>
            <person name="Birtle Z."/>
            <person name="Marques A.C."/>
            <person name="Graves T."/>
            <person name="Zhou S."/>
            <person name="Teague B."/>
            <person name="Potamousis K."/>
            <person name="Churas C."/>
            <person name="Place M."/>
            <person name="Herschleb J."/>
            <person name="Runnheim R."/>
            <person name="Forrest D."/>
            <person name="Amos-Landgraf J."/>
            <person name="Schwartz D.C."/>
            <person name="Cheng Z."/>
            <person name="Lindblad-Toh K."/>
            <person name="Eichler E.E."/>
            <person name="Ponting C.P."/>
        </authorList>
    </citation>
    <scope>NUCLEOTIDE SEQUENCE [LARGE SCALE GENOMIC DNA]</scope>
    <source>
        <strain>C57BL/6J</strain>
    </source>
</reference>
<reference key="6">
    <citation type="journal article" date="2004" name="Genome Res.">
        <title>The status, quality, and expansion of the NIH full-length cDNA project: the Mammalian Gene Collection (MGC).</title>
        <authorList>
            <consortium name="The MGC Project Team"/>
        </authorList>
    </citation>
    <scope>PARTIAL NUCLEOTIDE SEQUENCE [LARGE SCALE MRNA] (ISOFORM L-VEGF-1)</scope>
    <source>
        <strain>C57BL/6J</strain>
        <tissue>Brain</tissue>
    </source>
</reference>
<reference key="7">
    <citation type="submission" date="2004-09" db="EMBL/GenBank/DDBJ databases">
        <title>Alternatively spliced forms of mouse VEGF.</title>
        <authorList>
            <person name="Minchenko O.H."/>
            <person name="Minchenko D.O."/>
            <person name="Opentanova I.L."/>
        </authorList>
    </citation>
    <scope>NUCLEOTIDE SEQUENCE [MRNA] OF 179-301 (ISOFORMS VEGF-1/VEGF-2/VEGF-3)</scope>
    <source>
        <strain>C57BL/6J</strain>
        <tissue>Retina</tissue>
    </source>
</reference>
<reference key="8">
    <citation type="journal article" date="1996" name="J. Biol. Chem.">
        <title>The mouse gene for vascular endothelial growth factor. Genomic structure, definition of the transcriptional unit, and characterization of transcriptional and post-transcriptional regulatory sequences.</title>
        <authorList>
            <person name="Shima D.T."/>
            <person name="Kuroki M."/>
            <person name="Deutsch U."/>
            <person name="Ng Y."/>
            <person name="Adamis A.P."/>
            <person name="D'Amore P.A."/>
        </authorList>
    </citation>
    <scope>NUCLEOTIDE SEQUENCE [GENOMIC DNA] OF 179-181 (ISOFORMS VEGF-1/VEGF-2/VEGF-3/VEGF-4/VEGF-5)</scope>
</reference>
<reference key="9">
    <citation type="journal article" date="2000" name="Dev. Dyn.">
        <title>Regulation of VEGF and VEGF receptor expression in the rodent mammary gland during pregnancy, lactation, and involution.</title>
        <authorList>
            <person name="Pepper M.S."/>
            <person name="Baetens D."/>
            <person name="Mandriota S.J."/>
            <person name="Di Sanza C."/>
            <person name="Oikemus S."/>
            <person name="Lane T.F."/>
            <person name="Soriano J.V."/>
            <person name="Montesano R."/>
            <person name="Iruela-Arispe M.L."/>
        </authorList>
    </citation>
    <scope>DEVELOPMENTAL STAGE</scope>
</reference>
<reference key="10">
    <citation type="journal article" date="2005" name="Physiol. Genomics">
        <title>Embryonic lethality in Dear gene-deficient mice: new player in angiogenesis.</title>
        <authorList>
            <person name="Herrera V.L."/>
            <person name="Ponce L.R."/>
            <person name="Bagamasbad P.D."/>
            <person name="VanPelt B.D."/>
            <person name="Didishvili T."/>
            <person name="Ruiz-Opazo N."/>
        </authorList>
    </citation>
    <scope>FUNCTION</scope>
</reference>
<reference key="11">
    <citation type="journal article" date="2005" name="Yonsei Med. J.">
        <title>The regulators of VEGF expression in mouse ovaries.</title>
        <authorList>
            <person name="Shin S.-Y."/>
            <person name="Lee H.-J."/>
            <person name="Ko D.-S."/>
            <person name="Lee H.-C."/>
            <person name="Park W.I."/>
        </authorList>
    </citation>
    <scope>INDUCTION</scope>
</reference>
<reference key="12">
    <citation type="journal article" date="2015" name="Nature">
        <title>CMT2D neuropathy is linked to the neomorphic binding activity of glycyl-tRNA synthetase.</title>
        <authorList>
            <person name="He W."/>
            <person name="Bai G."/>
            <person name="Zhou H."/>
            <person name="Wei N."/>
            <person name="White N.M."/>
            <person name="Lauer J."/>
            <person name="Liu H."/>
            <person name="Shi Y."/>
            <person name="Dumitru C.D."/>
            <person name="Lettieri K."/>
            <person name="Shubayev V."/>
            <person name="Jordanova A."/>
            <person name="Guergueltcheva V."/>
            <person name="Griffin P.R."/>
            <person name="Burgess R.W."/>
            <person name="Pfaff S.L."/>
            <person name="Yang X.L."/>
        </authorList>
    </citation>
    <scope>FUNCTION</scope>
    <scope>INTERACTION WITH NRP1</scope>
</reference>
<reference key="13">
    <citation type="journal article" date="2016" name="Nature">
        <title>Corrigendum: CMT2D neuropathy is linked to the neomorphic binding activity of glycyl-tRNA synthetase.</title>
        <authorList>
            <person name="He W."/>
            <person name="Bai G."/>
            <person name="Zhou H."/>
            <person name="Wei N."/>
            <person name="White N.M."/>
            <person name="Lauer J."/>
            <person name="Liu H."/>
            <person name="Shi Y."/>
            <person name="Dan Dumitru C."/>
            <person name="Lettieri K."/>
            <person name="Shubayev V."/>
            <person name="Jordanova A."/>
            <person name="Guergueltcheva V."/>
            <person name="Griffin P.R."/>
            <person name="Burgess R.W."/>
            <person name="Pfaff S.L."/>
            <person name="Yang X.L."/>
        </authorList>
    </citation>
    <scope>ERRATUM OF PUBMED:26503042</scope>
</reference>
<reference key="14">
    <citation type="journal article" date="2022" name="Cells">
        <title>N-VEGF, the Autoregulatory Arm of VEGF-A.</title>
        <authorList>
            <person name="Katsman M."/>
            <person name="Azriel A."/>
            <person name="Horev G."/>
            <person name="Reizel Y."/>
            <person name="Levi B.Z."/>
        </authorList>
    </citation>
    <scope>FUNCTION (N-VEGF)</scope>
</reference>
<gene>
    <name type="primary">Vegfa</name>
    <name type="synonym">Vegf</name>
</gene>